<keyword id="KW-1185">Reference proteome</keyword>
<keyword id="KW-0687">Ribonucleoprotein</keyword>
<keyword id="KW-0689">Ribosomal protein</keyword>
<keyword id="KW-0694">RNA-binding</keyword>
<keyword id="KW-0699">rRNA-binding</keyword>
<feature type="chain" id="PRO_1000055327" description="Large ribosomal subunit protein uL6">
    <location>
        <begin position="1"/>
        <end position="177"/>
    </location>
</feature>
<sequence length="177" mass="18695">MSRVAKMPVTIPAGVDVSVKDDQIAVKGAGGTLSLAQNVLVKVTSSDGKLRFEPANESRQANAMSGTLRQLVNNMVLGVSKGFEKKLSLVGVGYKAAAAGAKLNLVVGYSHPVNIDMPAGITVTTPTPTEVVVKGADRQRVGQIAAEIRAVRPPEPYKGKGIRYADEKITIKETKKK</sequence>
<comment type="function">
    <text evidence="1">This protein binds to the 23S rRNA, and is important in its secondary structure. It is located near the subunit interface in the base of the L7/L12 stalk, and near the tRNA binding site of the peptidyltransferase center.</text>
</comment>
<comment type="subunit">
    <text evidence="1">Part of the 50S ribosomal subunit.</text>
</comment>
<comment type="similarity">
    <text evidence="1">Belongs to the universal ribosomal protein uL6 family.</text>
</comment>
<reference key="1">
    <citation type="submission" date="2006-12" db="EMBL/GenBank/DDBJ databases">
        <title>Complete sequence of chromosome 1 of Verminephrobacter eiseniae EF01-2.</title>
        <authorList>
            <person name="Copeland A."/>
            <person name="Lucas S."/>
            <person name="Lapidus A."/>
            <person name="Barry K."/>
            <person name="Detter J.C."/>
            <person name="Glavina del Rio T."/>
            <person name="Dalin E."/>
            <person name="Tice H."/>
            <person name="Pitluck S."/>
            <person name="Chertkov O."/>
            <person name="Brettin T."/>
            <person name="Bruce D."/>
            <person name="Han C."/>
            <person name="Tapia R."/>
            <person name="Gilna P."/>
            <person name="Schmutz J."/>
            <person name="Larimer F."/>
            <person name="Land M."/>
            <person name="Hauser L."/>
            <person name="Kyrpides N."/>
            <person name="Kim E."/>
            <person name="Stahl D."/>
            <person name="Richardson P."/>
        </authorList>
    </citation>
    <scope>NUCLEOTIDE SEQUENCE [LARGE SCALE GENOMIC DNA]</scope>
    <source>
        <strain>EF01-2</strain>
    </source>
</reference>
<dbReference type="EMBL" id="CP000542">
    <property type="protein sequence ID" value="ABM58058.1"/>
    <property type="molecule type" value="Genomic_DNA"/>
</dbReference>
<dbReference type="RefSeq" id="WP_011810061.1">
    <property type="nucleotide sequence ID" value="NC_008786.1"/>
</dbReference>
<dbReference type="SMR" id="A1WKA1"/>
<dbReference type="STRING" id="391735.Veis_2310"/>
<dbReference type="GeneID" id="76460875"/>
<dbReference type="KEGG" id="vei:Veis_2310"/>
<dbReference type="eggNOG" id="COG0097">
    <property type="taxonomic scope" value="Bacteria"/>
</dbReference>
<dbReference type="HOGENOM" id="CLU_065464_1_2_4"/>
<dbReference type="OrthoDB" id="9805007at2"/>
<dbReference type="Proteomes" id="UP000000374">
    <property type="component" value="Chromosome"/>
</dbReference>
<dbReference type="GO" id="GO:0022625">
    <property type="term" value="C:cytosolic large ribosomal subunit"/>
    <property type="evidence" value="ECO:0007669"/>
    <property type="project" value="TreeGrafter"/>
</dbReference>
<dbReference type="GO" id="GO:0019843">
    <property type="term" value="F:rRNA binding"/>
    <property type="evidence" value="ECO:0007669"/>
    <property type="project" value="UniProtKB-UniRule"/>
</dbReference>
<dbReference type="GO" id="GO:0003735">
    <property type="term" value="F:structural constituent of ribosome"/>
    <property type="evidence" value="ECO:0007669"/>
    <property type="project" value="InterPro"/>
</dbReference>
<dbReference type="GO" id="GO:0002181">
    <property type="term" value="P:cytoplasmic translation"/>
    <property type="evidence" value="ECO:0007669"/>
    <property type="project" value="TreeGrafter"/>
</dbReference>
<dbReference type="FunFam" id="3.90.930.12:FF:000001">
    <property type="entry name" value="50S ribosomal protein L6"/>
    <property type="match status" value="1"/>
</dbReference>
<dbReference type="FunFam" id="3.90.930.12:FF:000002">
    <property type="entry name" value="50S ribosomal protein L6"/>
    <property type="match status" value="1"/>
</dbReference>
<dbReference type="Gene3D" id="3.90.930.12">
    <property type="entry name" value="Ribosomal protein L6, alpha-beta domain"/>
    <property type="match status" value="2"/>
</dbReference>
<dbReference type="HAMAP" id="MF_01365_B">
    <property type="entry name" value="Ribosomal_uL6_B"/>
    <property type="match status" value="1"/>
</dbReference>
<dbReference type="InterPro" id="IPR000702">
    <property type="entry name" value="Ribosomal_uL6-like"/>
</dbReference>
<dbReference type="InterPro" id="IPR036789">
    <property type="entry name" value="Ribosomal_uL6-like_a/b-dom_sf"/>
</dbReference>
<dbReference type="InterPro" id="IPR020040">
    <property type="entry name" value="Ribosomal_uL6_a/b-dom"/>
</dbReference>
<dbReference type="InterPro" id="IPR019906">
    <property type="entry name" value="Ribosomal_uL6_bac-type"/>
</dbReference>
<dbReference type="InterPro" id="IPR002358">
    <property type="entry name" value="Ribosomal_uL6_CS"/>
</dbReference>
<dbReference type="NCBIfam" id="TIGR03654">
    <property type="entry name" value="L6_bact"/>
    <property type="match status" value="1"/>
</dbReference>
<dbReference type="PANTHER" id="PTHR11655">
    <property type="entry name" value="60S/50S RIBOSOMAL PROTEIN L6/L9"/>
    <property type="match status" value="1"/>
</dbReference>
<dbReference type="PANTHER" id="PTHR11655:SF14">
    <property type="entry name" value="LARGE RIBOSOMAL SUBUNIT PROTEIN UL6M"/>
    <property type="match status" value="1"/>
</dbReference>
<dbReference type="Pfam" id="PF00347">
    <property type="entry name" value="Ribosomal_L6"/>
    <property type="match status" value="2"/>
</dbReference>
<dbReference type="PIRSF" id="PIRSF002162">
    <property type="entry name" value="Ribosomal_L6"/>
    <property type="match status" value="1"/>
</dbReference>
<dbReference type="PRINTS" id="PR00059">
    <property type="entry name" value="RIBOSOMALL6"/>
</dbReference>
<dbReference type="SUPFAM" id="SSF56053">
    <property type="entry name" value="Ribosomal protein L6"/>
    <property type="match status" value="2"/>
</dbReference>
<dbReference type="PROSITE" id="PS00525">
    <property type="entry name" value="RIBOSOMAL_L6_1"/>
    <property type="match status" value="1"/>
</dbReference>
<protein>
    <recommendedName>
        <fullName evidence="1">Large ribosomal subunit protein uL6</fullName>
    </recommendedName>
    <alternativeName>
        <fullName evidence="2">50S ribosomal protein L6</fullName>
    </alternativeName>
</protein>
<name>RL6_VEREI</name>
<accession>A1WKA1</accession>
<organism>
    <name type="scientific">Verminephrobacter eiseniae (strain EF01-2)</name>
    <dbReference type="NCBI Taxonomy" id="391735"/>
    <lineage>
        <taxon>Bacteria</taxon>
        <taxon>Pseudomonadati</taxon>
        <taxon>Pseudomonadota</taxon>
        <taxon>Betaproteobacteria</taxon>
        <taxon>Burkholderiales</taxon>
        <taxon>Comamonadaceae</taxon>
        <taxon>Verminephrobacter</taxon>
    </lineage>
</organism>
<proteinExistence type="inferred from homology"/>
<evidence type="ECO:0000255" key="1">
    <source>
        <dbReference type="HAMAP-Rule" id="MF_01365"/>
    </source>
</evidence>
<evidence type="ECO:0000305" key="2"/>
<gene>
    <name evidence="1" type="primary">rplF</name>
    <name type="ordered locus">Veis_2310</name>
</gene>